<organism>
    <name type="scientific">Staphylococcus aureus (strain N315)</name>
    <dbReference type="NCBI Taxonomy" id="158879"/>
    <lineage>
        <taxon>Bacteria</taxon>
        <taxon>Bacillati</taxon>
        <taxon>Bacillota</taxon>
        <taxon>Bacilli</taxon>
        <taxon>Bacillales</taxon>
        <taxon>Staphylococcaceae</taxon>
        <taxon>Staphylococcus</taxon>
    </lineage>
</organism>
<gene>
    <name type="primary">hisI</name>
    <name type="synonym">hisIE</name>
    <name type="ordered locus">SA2464</name>
</gene>
<comment type="catalytic activity">
    <reaction>
        <text>1-(5-phospho-beta-D-ribosyl)-ATP + H2O = 1-(5-phospho-beta-D-ribosyl)-5'-AMP + diphosphate + H(+)</text>
        <dbReference type="Rhea" id="RHEA:22828"/>
        <dbReference type="ChEBI" id="CHEBI:15377"/>
        <dbReference type="ChEBI" id="CHEBI:15378"/>
        <dbReference type="ChEBI" id="CHEBI:33019"/>
        <dbReference type="ChEBI" id="CHEBI:59457"/>
        <dbReference type="ChEBI" id="CHEBI:73183"/>
        <dbReference type="EC" id="3.6.1.31"/>
    </reaction>
</comment>
<comment type="catalytic activity">
    <reaction>
        <text>1-(5-phospho-beta-D-ribosyl)-5'-AMP + H2O = 1-(5-phospho-beta-D-ribosyl)-5-[(5-phospho-beta-D-ribosylamino)methylideneamino]imidazole-4-carboxamide</text>
        <dbReference type="Rhea" id="RHEA:20049"/>
        <dbReference type="ChEBI" id="CHEBI:15377"/>
        <dbReference type="ChEBI" id="CHEBI:58435"/>
        <dbReference type="ChEBI" id="CHEBI:59457"/>
        <dbReference type="EC" id="3.5.4.19"/>
    </reaction>
</comment>
<comment type="pathway">
    <text>Amino-acid biosynthesis; L-histidine biosynthesis; L-histidine from 5-phospho-alpha-D-ribose 1-diphosphate: step 2/9.</text>
</comment>
<comment type="pathway">
    <text>Amino-acid biosynthesis; L-histidine biosynthesis; L-histidine from 5-phospho-alpha-D-ribose 1-diphosphate: step 3/9.</text>
</comment>
<comment type="subcellular location">
    <subcellularLocation>
        <location evidence="1">Cytoplasm</location>
    </subcellularLocation>
</comment>
<comment type="similarity">
    <text evidence="2">In the N-terminal section; belongs to the PRA-CH family.</text>
</comment>
<comment type="similarity">
    <text evidence="2">In the C-terminal section; belongs to the PRA-PH family.</text>
</comment>
<proteinExistence type="inferred from homology"/>
<reference key="1">
    <citation type="journal article" date="2001" name="Lancet">
        <title>Whole genome sequencing of meticillin-resistant Staphylococcus aureus.</title>
        <authorList>
            <person name="Kuroda M."/>
            <person name="Ohta T."/>
            <person name="Uchiyama I."/>
            <person name="Baba T."/>
            <person name="Yuzawa H."/>
            <person name="Kobayashi I."/>
            <person name="Cui L."/>
            <person name="Oguchi A."/>
            <person name="Aoki K."/>
            <person name="Nagai Y."/>
            <person name="Lian J.-Q."/>
            <person name="Ito T."/>
            <person name="Kanamori M."/>
            <person name="Matsumaru H."/>
            <person name="Maruyama A."/>
            <person name="Murakami H."/>
            <person name="Hosoyama A."/>
            <person name="Mizutani-Ui Y."/>
            <person name="Takahashi N.K."/>
            <person name="Sawano T."/>
            <person name="Inoue R."/>
            <person name="Kaito C."/>
            <person name="Sekimizu K."/>
            <person name="Hirakawa H."/>
            <person name="Kuhara S."/>
            <person name="Goto S."/>
            <person name="Yabuzaki J."/>
            <person name="Kanehisa M."/>
            <person name="Yamashita A."/>
            <person name="Oshima K."/>
            <person name="Furuya K."/>
            <person name="Yoshino C."/>
            <person name="Shiba T."/>
            <person name="Hattori M."/>
            <person name="Ogasawara N."/>
            <person name="Hayashi H."/>
            <person name="Hiramatsu K."/>
        </authorList>
    </citation>
    <scope>NUCLEOTIDE SEQUENCE [LARGE SCALE GENOMIC DNA]</scope>
    <source>
        <strain>N315</strain>
    </source>
</reference>
<dbReference type="EC" id="3.5.4.19"/>
<dbReference type="EC" id="3.6.1.31"/>
<dbReference type="EMBL" id="BA000018">
    <property type="protein sequence ID" value="BAB43770.1"/>
    <property type="molecule type" value="Genomic_DNA"/>
</dbReference>
<dbReference type="PIR" id="H90075">
    <property type="entry name" value="H90075"/>
</dbReference>
<dbReference type="SMR" id="P64356"/>
<dbReference type="EnsemblBacteria" id="BAB43770">
    <property type="protein sequence ID" value="BAB43770"/>
    <property type="gene ID" value="BAB43770"/>
</dbReference>
<dbReference type="KEGG" id="sau:SA2464"/>
<dbReference type="HOGENOM" id="CLU_048577_3_1_9"/>
<dbReference type="UniPathway" id="UPA00031">
    <property type="reaction ID" value="UER00007"/>
</dbReference>
<dbReference type="UniPathway" id="UPA00031">
    <property type="reaction ID" value="UER00008"/>
</dbReference>
<dbReference type="GO" id="GO:0005737">
    <property type="term" value="C:cytoplasm"/>
    <property type="evidence" value="ECO:0007669"/>
    <property type="project" value="UniProtKB-SubCell"/>
</dbReference>
<dbReference type="GO" id="GO:0005524">
    <property type="term" value="F:ATP binding"/>
    <property type="evidence" value="ECO:0007669"/>
    <property type="project" value="UniProtKB-KW"/>
</dbReference>
<dbReference type="GO" id="GO:0004635">
    <property type="term" value="F:phosphoribosyl-AMP cyclohydrolase activity"/>
    <property type="evidence" value="ECO:0007669"/>
    <property type="project" value="UniProtKB-UniRule"/>
</dbReference>
<dbReference type="GO" id="GO:0004636">
    <property type="term" value="F:phosphoribosyl-ATP diphosphatase activity"/>
    <property type="evidence" value="ECO:0007669"/>
    <property type="project" value="UniProtKB-UniRule"/>
</dbReference>
<dbReference type="GO" id="GO:0000105">
    <property type="term" value="P:L-histidine biosynthetic process"/>
    <property type="evidence" value="ECO:0007669"/>
    <property type="project" value="UniProtKB-UniRule"/>
</dbReference>
<dbReference type="CDD" id="cd11534">
    <property type="entry name" value="NTP-PPase_HisIE_like"/>
    <property type="match status" value="1"/>
</dbReference>
<dbReference type="FunFam" id="3.10.20.810:FF:000001">
    <property type="entry name" value="Histidine biosynthesis bifunctional protein HisIE"/>
    <property type="match status" value="1"/>
</dbReference>
<dbReference type="Gene3D" id="1.10.287.1080">
    <property type="entry name" value="MazG-like"/>
    <property type="match status" value="1"/>
</dbReference>
<dbReference type="Gene3D" id="3.10.20.810">
    <property type="entry name" value="Phosphoribosyl-AMP cyclohydrolase"/>
    <property type="match status" value="1"/>
</dbReference>
<dbReference type="HAMAP" id="MF_01020">
    <property type="entry name" value="HisE"/>
    <property type="match status" value="1"/>
</dbReference>
<dbReference type="HAMAP" id="MF_01021">
    <property type="entry name" value="HisI"/>
    <property type="match status" value="1"/>
</dbReference>
<dbReference type="HAMAP" id="MF_01019">
    <property type="entry name" value="HisIE"/>
    <property type="match status" value="1"/>
</dbReference>
<dbReference type="InterPro" id="IPR023019">
    <property type="entry name" value="His_synth_HisIE"/>
</dbReference>
<dbReference type="InterPro" id="IPR008179">
    <property type="entry name" value="HisE"/>
</dbReference>
<dbReference type="InterPro" id="IPR026660">
    <property type="entry name" value="PRA-CH"/>
</dbReference>
<dbReference type="InterPro" id="IPR021130">
    <property type="entry name" value="PRib-ATP_PPHydrolase-like"/>
</dbReference>
<dbReference type="InterPro" id="IPR002496">
    <property type="entry name" value="PRib_AMP_CycHydrolase_dom"/>
</dbReference>
<dbReference type="InterPro" id="IPR038019">
    <property type="entry name" value="PRib_AMP_CycHydrolase_sf"/>
</dbReference>
<dbReference type="NCBIfam" id="TIGR03188">
    <property type="entry name" value="histidine_hisI"/>
    <property type="match status" value="1"/>
</dbReference>
<dbReference type="NCBIfam" id="NF000768">
    <property type="entry name" value="PRK00051.1"/>
    <property type="match status" value="1"/>
</dbReference>
<dbReference type="NCBIfam" id="NF002747">
    <property type="entry name" value="PRK02759.1"/>
    <property type="match status" value="1"/>
</dbReference>
<dbReference type="PANTHER" id="PTHR42945">
    <property type="entry name" value="HISTIDINE BIOSYNTHESIS BIFUNCTIONAL PROTEIN"/>
    <property type="match status" value="1"/>
</dbReference>
<dbReference type="PANTHER" id="PTHR42945:SF1">
    <property type="entry name" value="HISTIDINE BIOSYNTHESIS BIFUNCTIONAL PROTEIN HIS7"/>
    <property type="match status" value="1"/>
</dbReference>
<dbReference type="Pfam" id="PF01502">
    <property type="entry name" value="PRA-CH"/>
    <property type="match status" value="1"/>
</dbReference>
<dbReference type="Pfam" id="PF01503">
    <property type="entry name" value="PRA-PH"/>
    <property type="match status" value="1"/>
</dbReference>
<dbReference type="SUPFAM" id="SSF101386">
    <property type="entry name" value="all-alpha NTP pyrophosphatases"/>
    <property type="match status" value="1"/>
</dbReference>
<dbReference type="SUPFAM" id="SSF141734">
    <property type="entry name" value="HisI-like"/>
    <property type="match status" value="1"/>
</dbReference>
<sequence>MTKYKIDFSKGLVPAILQDNQTKQVLMLGYMNQEAFDKTIEDGVVCFYSRSKQRLWTKGETSGHTQLVKDIHVDCDNDTILIDVIPNGPTCHTGSQSCFNTEVPFSVQTLAQTVQDSAQSNNEKSYTKYLLTEGIEKITKKYGEEAFEVVIEAIKGDKKAFVSEVADELYHLFVLMHALGVDFSEIEAELARRHHKRNNFKGERQNIEQW</sequence>
<feature type="chain" id="PRO_0000136432" description="Histidine biosynthesis bifunctional protein HisIE">
    <location>
        <begin position="1"/>
        <end position="210"/>
    </location>
</feature>
<feature type="region of interest" description="Phosphoribosyl-AMP cyclohydrolase">
    <location>
        <begin position="1"/>
        <end position="106"/>
    </location>
</feature>
<feature type="region of interest" description="Phosphoribosyl-ATP pyrophosphohydrolase">
    <location>
        <begin position="107"/>
        <end position="210"/>
    </location>
</feature>
<evidence type="ECO:0000250" key="1"/>
<evidence type="ECO:0000305" key="2"/>
<name>HIS2_STAAN</name>
<keyword id="KW-0028">Amino-acid biosynthesis</keyword>
<keyword id="KW-0067">ATP-binding</keyword>
<keyword id="KW-0963">Cytoplasm</keyword>
<keyword id="KW-0368">Histidine biosynthesis</keyword>
<keyword id="KW-0378">Hydrolase</keyword>
<keyword id="KW-0511">Multifunctional enzyme</keyword>
<keyword id="KW-0547">Nucleotide-binding</keyword>
<accession>P64356</accession>
<accession>Q99QW9</accession>
<protein>
    <recommendedName>
        <fullName>Histidine biosynthesis bifunctional protein HisIE</fullName>
    </recommendedName>
    <domain>
        <recommendedName>
            <fullName>Phosphoribosyl-AMP cyclohydrolase</fullName>
            <shortName>PRA-CH</shortName>
            <ecNumber>3.5.4.19</ecNumber>
        </recommendedName>
    </domain>
    <domain>
        <recommendedName>
            <fullName>Phosphoribosyl-ATP pyrophosphatase</fullName>
            <shortName>PRA-PH</shortName>
            <ecNumber>3.6.1.31</ecNumber>
        </recommendedName>
    </domain>
</protein>